<feature type="chain" id="PRO_0000283576" description="Ammonium transporter Rh type C">
    <location>
        <begin position="1"/>
        <end position="460"/>
    </location>
</feature>
<feature type="topological domain" description="Cytoplasmic" evidence="3">
    <location>
        <begin position="1"/>
        <end position="9"/>
    </location>
</feature>
<feature type="transmembrane region" description="Helical" evidence="3">
    <location>
        <begin position="10"/>
        <end position="30"/>
    </location>
</feature>
<feature type="topological domain" description="Extracellular" evidence="3">
    <location>
        <begin position="31"/>
        <end position="61"/>
    </location>
</feature>
<feature type="transmembrane region" description="Helical" evidence="3">
    <location>
        <begin position="62"/>
        <end position="82"/>
    </location>
</feature>
<feature type="topological domain" description="Cytoplasmic" evidence="3">
    <location>
        <begin position="83"/>
        <end position="90"/>
    </location>
</feature>
<feature type="transmembrane region" description="Helical" evidence="3">
    <location>
        <begin position="91"/>
        <end position="111"/>
    </location>
</feature>
<feature type="topological domain" description="Extracellular" evidence="3">
    <location>
        <begin position="112"/>
        <end position="125"/>
    </location>
</feature>
<feature type="transmembrane region" description="Helical" evidence="3">
    <location>
        <begin position="126"/>
        <end position="145"/>
    </location>
</feature>
<feature type="topological domain" description="Cytoplasmic" evidence="3">
    <location>
        <begin position="146"/>
        <end position="151"/>
    </location>
</feature>
<feature type="transmembrane region" description="Helical" evidence="3">
    <location>
        <begin position="152"/>
        <end position="174"/>
    </location>
</feature>
<feature type="topological domain" description="Extracellular" evidence="3">
    <location>
        <begin position="175"/>
        <end position="179"/>
    </location>
</feature>
<feature type="transmembrane region" description="Helical" evidence="3">
    <location>
        <begin position="180"/>
        <end position="200"/>
    </location>
</feature>
<feature type="topological domain" description="Cytoplasmic" evidence="3">
    <location>
        <begin position="201"/>
        <end position="219"/>
    </location>
</feature>
<feature type="transmembrane region" description="Helical" evidence="3">
    <location>
        <begin position="220"/>
        <end position="240"/>
    </location>
</feature>
<feature type="topological domain" description="Extracellular" evidence="3">
    <location>
        <begin position="241"/>
        <end position="251"/>
    </location>
</feature>
<feature type="transmembrane region" description="Helical" evidence="3">
    <location>
        <begin position="252"/>
        <end position="272"/>
    </location>
</feature>
<feature type="topological domain" description="Cytoplasmic" evidence="3">
    <location>
        <begin position="273"/>
        <end position="285"/>
    </location>
</feature>
<feature type="transmembrane region" description="Helical" evidence="3">
    <location>
        <begin position="286"/>
        <end position="306"/>
    </location>
</feature>
<feature type="topological domain" description="Extracellular" evidence="3">
    <location>
        <position position="307"/>
    </location>
</feature>
<feature type="transmembrane region" description="Helical" evidence="3">
    <location>
        <begin position="308"/>
        <end position="328"/>
    </location>
</feature>
<feature type="topological domain" description="Cytoplasmic" evidence="3">
    <location>
        <begin position="329"/>
        <end position="339"/>
    </location>
</feature>
<feature type="transmembrane region" description="Helical" evidence="3">
    <location>
        <begin position="340"/>
        <end position="360"/>
    </location>
</feature>
<feature type="topological domain" description="Extracellular" evidence="3">
    <location>
        <begin position="361"/>
        <end position="396"/>
    </location>
</feature>
<feature type="transmembrane region" description="Helical" evidence="3">
    <location>
        <begin position="397"/>
        <end position="417"/>
    </location>
</feature>
<feature type="topological domain" description="Cytoplasmic" evidence="3">
    <location>
        <begin position="418"/>
        <end position="460"/>
    </location>
</feature>
<feature type="glycosylation site" description="N-linked (GlcNAc...) asparagine" evidence="3">
    <location>
        <position position="48"/>
    </location>
</feature>
<name>RHCG_CANLF</name>
<accession>Q3BCQ4</accession>
<gene>
    <name type="primary">RHCG</name>
</gene>
<keyword id="KW-0924">Ammonia transport</keyword>
<keyword id="KW-1003">Cell membrane</keyword>
<keyword id="KW-0325">Glycoprotein</keyword>
<keyword id="KW-0472">Membrane</keyword>
<keyword id="KW-1185">Reference proteome</keyword>
<keyword id="KW-0812">Transmembrane</keyword>
<keyword id="KW-1133">Transmembrane helix</keyword>
<keyword id="KW-0813">Transport</keyword>
<sequence>MVWNTNLRWRLPVTCLLLQVALVVLFGVFVRYDMDADPHWIDKKEAENSTSDMENEFYYRYPSFQDVHVMIFVGFGFLMTFLQRYGYSSVGFNFLLAAFGIQWALLLQGWFHSYYRGYIRVGVENLINADFCVGSVCVAFGAVLGKVSPVQLLIMTLFQVTLFSVNEFILLNLLEVKDAGGSMTIHTFGAYFGLTVTWILYRPGLHQSKERQSSVYHSDLFAMIGTLFLWMYWPSFNSAVSNHGDAQHRAAINTYCSLAACVLTSVALSSALHKKGKLDMVHIQNATLAGGVAVGTAAEMMLMPYGSLIVGFICGIVSTLGFVYLTPFLESRLRVQDTCGIHNLHGIPGIIGAIVGAVTASCANTDVYGVNGLTQAFGFDGFKTNRTPSMQGKFQAAGLFVSLAMALVGGIIVGIILKLPFWGQPADENCFEDAIYWEMPEEPKSTVLHPEDSTLKPSEP</sequence>
<proteinExistence type="evidence at transcript level"/>
<protein>
    <recommendedName>
        <fullName>Ammonium transporter Rh type C</fullName>
    </recommendedName>
    <alternativeName>
        <fullName>Rhesus blood group family type C glycoprotein</fullName>
        <shortName>Rh family type C glycoprotein</shortName>
        <shortName>Rh type C glycoprotein</shortName>
    </alternativeName>
</protein>
<evidence type="ECO:0000250" key="1"/>
<evidence type="ECO:0000250" key="2">
    <source>
        <dbReference type="UniProtKB" id="Q9UBD6"/>
    </source>
</evidence>
<evidence type="ECO:0000255" key="3"/>
<evidence type="ECO:0000305" key="4"/>
<reference key="1">
    <citation type="journal article" date="2005" name="Proc. Natl. Acad. Sci. U.S.A.">
        <title>Evolutionary conservation and diversification of Rh family genes and proteins.</title>
        <authorList>
            <person name="Huang C.-H."/>
            <person name="Peng J."/>
        </authorList>
    </citation>
    <scope>NUCLEOTIDE SEQUENCE [MRNA]</scope>
    <source>
        <tissue>Kidney</tissue>
    </source>
</reference>
<comment type="function">
    <text evidence="2">Ammonium transporter involved in the maintenance of acid-base homeostasis. Transports ammonium and its related derivative methylammonium across the plasma membrane of epithelial cells likely contributing to renal transepithelial ammonia transport and ammonia metabolism. Postulated to primarily mediate an electroneutral bidirectional transport of NH3 ammonia species according to a mechanism that implies interaction of an NH4(+) ion with acidic residues of the pore entry followed by dissociation of NH4(+) into NH3 and H(+). As a result NH3 transits through the central pore and is protonated on the extracellular side reforming NH4(+) (By similarity). May act as a CO2 channel providing for renal acid secretion (By similarity).</text>
</comment>
<comment type="catalytic activity">
    <reaction evidence="2">
        <text>NH4(+)(in) = NH4(+)(out)</text>
        <dbReference type="Rhea" id="RHEA:28747"/>
        <dbReference type="ChEBI" id="CHEBI:28938"/>
    </reaction>
    <physiologicalReaction direction="left-to-right" evidence="2">
        <dbReference type="Rhea" id="RHEA:28748"/>
    </physiologicalReaction>
    <physiologicalReaction direction="right-to-left" evidence="2">
        <dbReference type="Rhea" id="RHEA:28749"/>
    </physiologicalReaction>
</comment>
<comment type="catalytic activity">
    <reaction evidence="2">
        <text>methylamine(out) = methylamine(in)</text>
        <dbReference type="Rhea" id="RHEA:74391"/>
        <dbReference type="ChEBI" id="CHEBI:59338"/>
    </reaction>
    <physiologicalReaction direction="left-to-right" evidence="2">
        <dbReference type="Rhea" id="RHEA:74392"/>
    </physiologicalReaction>
</comment>
<comment type="catalytic activity">
    <reaction evidence="2">
        <text>CO2(out) = CO2(in)</text>
        <dbReference type="Rhea" id="RHEA:74891"/>
        <dbReference type="ChEBI" id="CHEBI:16526"/>
    </reaction>
    <physiologicalReaction direction="left-to-right" evidence="2">
        <dbReference type="Rhea" id="RHEA:74892"/>
    </physiologicalReaction>
</comment>
<comment type="subunit">
    <text evidence="2">Homotrimer.</text>
</comment>
<comment type="subcellular location">
    <subcellularLocation>
        <location evidence="1">Apical cell membrane</location>
        <topology evidence="1">Multi-pass membrane protein</topology>
    </subcellularLocation>
    <text evidence="1">Also detected at the basolateral membrane and in subapical vesicles.</text>
</comment>
<comment type="PTM">
    <text evidence="1">N-glycosylated.</text>
</comment>
<comment type="similarity">
    <text evidence="4">Belongs to the ammonium transporter (TC 2.A.49) family. Rh subfamily.</text>
</comment>
<dbReference type="EMBL" id="AY831678">
    <property type="protein sequence ID" value="AAX39720.1"/>
    <property type="molecule type" value="mRNA"/>
</dbReference>
<dbReference type="RefSeq" id="NP_001041487.1">
    <property type="nucleotide sequence ID" value="NM_001048022.1"/>
</dbReference>
<dbReference type="SMR" id="Q3BCQ4"/>
<dbReference type="FunCoup" id="Q3BCQ4">
    <property type="interactions" value="7"/>
</dbReference>
<dbReference type="STRING" id="9615.ENSCAFP00000017570"/>
<dbReference type="GlyCosmos" id="Q3BCQ4">
    <property type="glycosylation" value="1 site, No reported glycans"/>
</dbReference>
<dbReference type="PaxDb" id="9612-ENSCAFP00000017570"/>
<dbReference type="GeneID" id="479040"/>
<dbReference type="KEGG" id="cfa:479040"/>
<dbReference type="CTD" id="51458"/>
<dbReference type="eggNOG" id="KOG3796">
    <property type="taxonomic scope" value="Eukaryota"/>
</dbReference>
<dbReference type="HOGENOM" id="CLU_021386_0_0_1"/>
<dbReference type="InParanoid" id="Q3BCQ4"/>
<dbReference type="OMA" id="LAVFTIQ"/>
<dbReference type="OrthoDB" id="534912at2759"/>
<dbReference type="TreeFam" id="TF314450"/>
<dbReference type="Proteomes" id="UP000002254">
    <property type="component" value="Unplaced"/>
</dbReference>
<dbReference type="Proteomes" id="UP000694429">
    <property type="component" value="Unplaced"/>
</dbReference>
<dbReference type="Proteomes" id="UP000694542">
    <property type="component" value="Unplaced"/>
</dbReference>
<dbReference type="Proteomes" id="UP000805418">
    <property type="component" value="Unplaced"/>
</dbReference>
<dbReference type="GO" id="GO:0016324">
    <property type="term" value="C:apical plasma membrane"/>
    <property type="evidence" value="ECO:0000250"/>
    <property type="project" value="UniProtKB"/>
</dbReference>
<dbReference type="GO" id="GO:0016323">
    <property type="term" value="C:basolateral plasma membrane"/>
    <property type="evidence" value="ECO:0000318"/>
    <property type="project" value="GO_Central"/>
</dbReference>
<dbReference type="GO" id="GO:0031410">
    <property type="term" value="C:cytoplasmic vesicle"/>
    <property type="evidence" value="ECO:0000250"/>
    <property type="project" value="UniProtKB"/>
</dbReference>
<dbReference type="GO" id="GO:0005886">
    <property type="term" value="C:plasma membrane"/>
    <property type="evidence" value="ECO:0000314"/>
    <property type="project" value="UniProtKB"/>
</dbReference>
<dbReference type="GO" id="GO:0008519">
    <property type="term" value="F:ammonium channel activity"/>
    <property type="evidence" value="ECO:0000314"/>
    <property type="project" value="UniProtKB"/>
</dbReference>
<dbReference type="GO" id="GO:0035379">
    <property type="term" value="F:carbon dioxide transmembrane transporter activity"/>
    <property type="evidence" value="ECO:0000250"/>
    <property type="project" value="UniProtKB"/>
</dbReference>
<dbReference type="GO" id="GO:0097272">
    <property type="term" value="P:ammonium homeostasis"/>
    <property type="evidence" value="ECO:0000318"/>
    <property type="project" value="GO_Central"/>
</dbReference>
<dbReference type="GO" id="GO:0072488">
    <property type="term" value="P:ammonium transmembrane transport"/>
    <property type="evidence" value="ECO:0000314"/>
    <property type="project" value="UniProtKB"/>
</dbReference>
<dbReference type="FunFam" id="1.10.3430.10:FF:000001">
    <property type="entry name" value="Ammonium transporter Rh type C"/>
    <property type="match status" value="1"/>
</dbReference>
<dbReference type="Gene3D" id="1.10.3430.10">
    <property type="entry name" value="Ammonium transporter AmtB like domains"/>
    <property type="match status" value="1"/>
</dbReference>
<dbReference type="InterPro" id="IPR029020">
    <property type="entry name" value="Ammonium/urea_transptr"/>
</dbReference>
<dbReference type="InterPro" id="IPR024041">
    <property type="entry name" value="NH4_transpt_AmtB-like_dom"/>
</dbReference>
<dbReference type="InterPro" id="IPR002229">
    <property type="entry name" value="RhesusRHD"/>
</dbReference>
<dbReference type="PANTHER" id="PTHR11730">
    <property type="entry name" value="AMMONIUM TRANSPORTER"/>
    <property type="match status" value="1"/>
</dbReference>
<dbReference type="PANTHER" id="PTHR11730:SF30">
    <property type="entry name" value="AMMONIUM TRANSPORTER RH TYPE C"/>
    <property type="match status" value="1"/>
</dbReference>
<dbReference type="Pfam" id="PF00909">
    <property type="entry name" value="Ammonium_transp"/>
    <property type="match status" value="1"/>
</dbReference>
<dbReference type="PRINTS" id="PR00342">
    <property type="entry name" value="RHESUSRHD"/>
</dbReference>
<dbReference type="SUPFAM" id="SSF111352">
    <property type="entry name" value="Ammonium transporter"/>
    <property type="match status" value="1"/>
</dbReference>
<organism>
    <name type="scientific">Canis lupus familiaris</name>
    <name type="common">Dog</name>
    <name type="synonym">Canis familiaris</name>
    <dbReference type="NCBI Taxonomy" id="9615"/>
    <lineage>
        <taxon>Eukaryota</taxon>
        <taxon>Metazoa</taxon>
        <taxon>Chordata</taxon>
        <taxon>Craniata</taxon>
        <taxon>Vertebrata</taxon>
        <taxon>Euteleostomi</taxon>
        <taxon>Mammalia</taxon>
        <taxon>Eutheria</taxon>
        <taxon>Laurasiatheria</taxon>
        <taxon>Carnivora</taxon>
        <taxon>Caniformia</taxon>
        <taxon>Canidae</taxon>
        <taxon>Canis</taxon>
    </lineage>
</organism>